<dbReference type="EC" id="6.3.4.20" evidence="1"/>
<dbReference type="EMBL" id="BX640411">
    <property type="protein sequence ID" value="CAE40594.1"/>
    <property type="status" value="ALT_INIT"/>
    <property type="molecule type" value="Genomic_DNA"/>
</dbReference>
<dbReference type="RefSeq" id="NP_879102.1">
    <property type="nucleotide sequence ID" value="NC_002929.2"/>
</dbReference>
<dbReference type="SMR" id="Q7W0D1"/>
<dbReference type="STRING" id="257313.BP0214"/>
<dbReference type="PaxDb" id="257313-BP0214"/>
<dbReference type="KEGG" id="bpe:BP0214"/>
<dbReference type="PATRIC" id="fig|257313.5.peg.231"/>
<dbReference type="eggNOG" id="COG0603">
    <property type="taxonomic scope" value="Bacteria"/>
</dbReference>
<dbReference type="HOGENOM" id="CLU_081854_0_0_4"/>
<dbReference type="UniPathway" id="UPA00391"/>
<dbReference type="Proteomes" id="UP000002676">
    <property type="component" value="Chromosome"/>
</dbReference>
<dbReference type="GO" id="GO:0005524">
    <property type="term" value="F:ATP binding"/>
    <property type="evidence" value="ECO:0007669"/>
    <property type="project" value="UniProtKB-UniRule"/>
</dbReference>
<dbReference type="GO" id="GO:0016879">
    <property type="term" value="F:ligase activity, forming carbon-nitrogen bonds"/>
    <property type="evidence" value="ECO:0007669"/>
    <property type="project" value="UniProtKB-UniRule"/>
</dbReference>
<dbReference type="GO" id="GO:0008270">
    <property type="term" value="F:zinc ion binding"/>
    <property type="evidence" value="ECO:0007669"/>
    <property type="project" value="UniProtKB-UniRule"/>
</dbReference>
<dbReference type="GO" id="GO:0008616">
    <property type="term" value="P:queuosine biosynthetic process"/>
    <property type="evidence" value="ECO:0007669"/>
    <property type="project" value="UniProtKB-UniRule"/>
</dbReference>
<dbReference type="CDD" id="cd01995">
    <property type="entry name" value="QueC-like"/>
    <property type="match status" value="1"/>
</dbReference>
<dbReference type="Gene3D" id="3.40.50.620">
    <property type="entry name" value="HUPs"/>
    <property type="match status" value="1"/>
</dbReference>
<dbReference type="HAMAP" id="MF_01633">
    <property type="entry name" value="QueC"/>
    <property type="match status" value="1"/>
</dbReference>
<dbReference type="InterPro" id="IPR018317">
    <property type="entry name" value="QueC"/>
</dbReference>
<dbReference type="InterPro" id="IPR014729">
    <property type="entry name" value="Rossmann-like_a/b/a_fold"/>
</dbReference>
<dbReference type="NCBIfam" id="TIGR00364">
    <property type="entry name" value="7-cyano-7-deazaguanine synthase QueC"/>
    <property type="match status" value="1"/>
</dbReference>
<dbReference type="PANTHER" id="PTHR42914">
    <property type="entry name" value="7-CYANO-7-DEAZAGUANINE SYNTHASE"/>
    <property type="match status" value="1"/>
</dbReference>
<dbReference type="PANTHER" id="PTHR42914:SF1">
    <property type="entry name" value="7-CYANO-7-DEAZAGUANINE SYNTHASE"/>
    <property type="match status" value="1"/>
</dbReference>
<dbReference type="Pfam" id="PF06508">
    <property type="entry name" value="QueC"/>
    <property type="match status" value="1"/>
</dbReference>
<dbReference type="PIRSF" id="PIRSF006293">
    <property type="entry name" value="ExsB"/>
    <property type="match status" value="1"/>
</dbReference>
<dbReference type="SUPFAM" id="SSF52402">
    <property type="entry name" value="Adenine nucleotide alpha hydrolases-like"/>
    <property type="match status" value="1"/>
</dbReference>
<accession>Q7W0D1</accession>
<protein>
    <recommendedName>
        <fullName evidence="1">7-cyano-7-deazaguanine synthase</fullName>
        <ecNumber evidence="1">6.3.4.20</ecNumber>
    </recommendedName>
    <alternativeName>
        <fullName evidence="1">7-cyano-7-carbaguanine synthase</fullName>
    </alternativeName>
    <alternativeName>
        <fullName evidence="1">PreQ(0) synthase</fullName>
    </alternativeName>
    <alternativeName>
        <fullName evidence="1">Queuosine biosynthesis protein QueC</fullName>
    </alternativeName>
</protein>
<comment type="function">
    <text evidence="1">Catalyzes the ATP-dependent conversion of 7-carboxy-7-deazaguanine (CDG) to 7-cyano-7-deazaguanine (preQ(0)).</text>
</comment>
<comment type="catalytic activity">
    <reaction evidence="1">
        <text>7-carboxy-7-deazaguanine + NH4(+) + ATP = 7-cyano-7-deazaguanine + ADP + phosphate + H2O + H(+)</text>
        <dbReference type="Rhea" id="RHEA:27982"/>
        <dbReference type="ChEBI" id="CHEBI:15377"/>
        <dbReference type="ChEBI" id="CHEBI:15378"/>
        <dbReference type="ChEBI" id="CHEBI:28938"/>
        <dbReference type="ChEBI" id="CHEBI:30616"/>
        <dbReference type="ChEBI" id="CHEBI:43474"/>
        <dbReference type="ChEBI" id="CHEBI:45075"/>
        <dbReference type="ChEBI" id="CHEBI:61036"/>
        <dbReference type="ChEBI" id="CHEBI:456216"/>
        <dbReference type="EC" id="6.3.4.20"/>
    </reaction>
</comment>
<comment type="cofactor">
    <cofactor evidence="1">
        <name>Zn(2+)</name>
        <dbReference type="ChEBI" id="CHEBI:29105"/>
    </cofactor>
    <text evidence="1">Binds 1 zinc ion per subunit.</text>
</comment>
<comment type="pathway">
    <text evidence="1">Purine metabolism; 7-cyano-7-deazaguanine biosynthesis.</text>
</comment>
<comment type="similarity">
    <text evidence="1">Belongs to the QueC family.</text>
</comment>
<comment type="sequence caution" evidence="2">
    <conflict type="erroneous initiation">
        <sequence resource="EMBL-CDS" id="CAE40594"/>
    </conflict>
</comment>
<proteinExistence type="inferred from homology"/>
<keyword id="KW-0067">ATP-binding</keyword>
<keyword id="KW-0436">Ligase</keyword>
<keyword id="KW-0479">Metal-binding</keyword>
<keyword id="KW-0547">Nucleotide-binding</keyword>
<keyword id="KW-0671">Queuosine biosynthesis</keyword>
<keyword id="KW-1185">Reference proteome</keyword>
<keyword id="KW-0862">Zinc</keyword>
<gene>
    <name evidence="1" type="primary">queC</name>
    <name type="ordered locus">BP0214</name>
</gene>
<feature type="chain" id="PRO_0000246811" description="7-cyano-7-deazaguanine synthase">
    <location>
        <begin position="1"/>
        <end position="244"/>
    </location>
</feature>
<feature type="binding site" evidence="1">
    <location>
        <begin position="17"/>
        <end position="27"/>
    </location>
    <ligand>
        <name>ATP</name>
        <dbReference type="ChEBI" id="CHEBI:30616"/>
    </ligand>
</feature>
<feature type="binding site" evidence="1">
    <location>
        <position position="205"/>
    </location>
    <ligand>
        <name>Zn(2+)</name>
        <dbReference type="ChEBI" id="CHEBI:29105"/>
    </ligand>
</feature>
<feature type="binding site" evidence="1">
    <location>
        <position position="220"/>
    </location>
    <ligand>
        <name>Zn(2+)</name>
        <dbReference type="ChEBI" id="CHEBI:29105"/>
    </ligand>
</feature>
<feature type="binding site" evidence="1">
    <location>
        <position position="223"/>
    </location>
    <ligand>
        <name>Zn(2+)</name>
        <dbReference type="ChEBI" id="CHEBI:29105"/>
    </ligand>
</feature>
<feature type="binding site" evidence="1">
    <location>
        <position position="226"/>
    </location>
    <ligand>
        <name>Zn(2+)</name>
        <dbReference type="ChEBI" id="CHEBI:29105"/>
    </ligand>
</feature>
<evidence type="ECO:0000255" key="1">
    <source>
        <dbReference type="HAMAP-Rule" id="MF_01633"/>
    </source>
</evidence>
<evidence type="ECO:0000305" key="2"/>
<reference key="1">
    <citation type="journal article" date="2003" name="Nat. Genet.">
        <title>Comparative analysis of the genome sequences of Bordetella pertussis, Bordetella parapertussis and Bordetella bronchiseptica.</title>
        <authorList>
            <person name="Parkhill J."/>
            <person name="Sebaihia M."/>
            <person name="Preston A."/>
            <person name="Murphy L.D."/>
            <person name="Thomson N.R."/>
            <person name="Harris D.E."/>
            <person name="Holden M.T.G."/>
            <person name="Churcher C.M."/>
            <person name="Bentley S.D."/>
            <person name="Mungall K.L."/>
            <person name="Cerdeno-Tarraga A.-M."/>
            <person name="Temple L."/>
            <person name="James K.D."/>
            <person name="Harris B."/>
            <person name="Quail M.A."/>
            <person name="Achtman M."/>
            <person name="Atkin R."/>
            <person name="Baker S."/>
            <person name="Basham D."/>
            <person name="Bason N."/>
            <person name="Cherevach I."/>
            <person name="Chillingworth T."/>
            <person name="Collins M."/>
            <person name="Cronin A."/>
            <person name="Davis P."/>
            <person name="Doggett J."/>
            <person name="Feltwell T."/>
            <person name="Goble A."/>
            <person name="Hamlin N."/>
            <person name="Hauser H."/>
            <person name="Holroyd S."/>
            <person name="Jagels K."/>
            <person name="Leather S."/>
            <person name="Moule S."/>
            <person name="Norberczak H."/>
            <person name="O'Neil S."/>
            <person name="Ormond D."/>
            <person name="Price C."/>
            <person name="Rabbinowitsch E."/>
            <person name="Rutter S."/>
            <person name="Sanders M."/>
            <person name="Saunders D."/>
            <person name="Seeger K."/>
            <person name="Sharp S."/>
            <person name="Simmonds M."/>
            <person name="Skelton J."/>
            <person name="Squares R."/>
            <person name="Squares S."/>
            <person name="Stevens K."/>
            <person name="Unwin L."/>
            <person name="Whitehead S."/>
            <person name="Barrell B.G."/>
            <person name="Maskell D.J."/>
        </authorList>
    </citation>
    <scope>NUCLEOTIDE SEQUENCE [LARGE SCALE GENOMIC DNA]</scope>
    <source>
        <strain>Tohama I / ATCC BAA-589 / NCTC 13251</strain>
    </source>
</reference>
<sequence>MFRCLMQNHQRRALVLFSGGQDSTTCLAWALERYAHVETLGFDYGQRHRVELDARQVVLRELRANFPDWAQRLGDDHLLDLGILAQVGDTAMTSDREIEMQANGLPNTFVPGRNLLFLTLAAALGYRRQLDVLVGGMCETDFSGYPDCRDDTIKSQQVTLGLGLGTRVTIETPLMWLDKAQTWELADRLGGQALVDMVIEHSHTCYLGERGQRHDWGYGCGHCPACALRKNGWERWVAGAAHAD</sequence>
<name>QUEC_BORPE</name>
<organism>
    <name type="scientific">Bordetella pertussis (strain Tohama I / ATCC BAA-589 / NCTC 13251)</name>
    <dbReference type="NCBI Taxonomy" id="257313"/>
    <lineage>
        <taxon>Bacteria</taxon>
        <taxon>Pseudomonadati</taxon>
        <taxon>Pseudomonadota</taxon>
        <taxon>Betaproteobacteria</taxon>
        <taxon>Burkholderiales</taxon>
        <taxon>Alcaligenaceae</taxon>
        <taxon>Bordetella</taxon>
    </lineage>
</organism>